<name>DAPB_HELPG</name>
<reference key="1">
    <citation type="journal article" date="2009" name="J. Bacteriol.">
        <title>The complete genome sequence of Helicobacter pylori strain G27.</title>
        <authorList>
            <person name="Baltrus D.A."/>
            <person name="Amieva M.R."/>
            <person name="Covacci A."/>
            <person name="Lowe T.M."/>
            <person name="Merrell D.S."/>
            <person name="Ottemann K.M."/>
            <person name="Stein M."/>
            <person name="Salama N.R."/>
            <person name="Guillemin K."/>
        </authorList>
    </citation>
    <scope>NUCLEOTIDE SEQUENCE [LARGE SCALE GENOMIC DNA]</scope>
    <source>
        <strain>G27</strain>
    </source>
</reference>
<sequence length="254" mass="27824">MKIGVYGASGRIGKLLLEELKGGYKGLELSSVFVRQKCETDFSSFSHAPLVTNDLKAFVRACECVIDFSLPKGVDHLLEALLECPKILVSGTTGLEKETLEKMQKLALKAPLLHAHNMSIGIMMLNQLAFLASLKLKDADIEIIETHHNLKKDAPSGTALSLYETCAKARGYDEKNALTTHREGLRSKESIGIAALRGGDVAGKHTIGFYLEGEYIELSHTATNRSIFAKGALEVALWLKDKAAKKYEINEMFG</sequence>
<protein>
    <recommendedName>
        <fullName evidence="1">4-hydroxy-tetrahydrodipicolinate reductase</fullName>
        <shortName evidence="1">HTPA reductase</shortName>
        <ecNumber evidence="1">1.17.1.8</ecNumber>
    </recommendedName>
</protein>
<accession>B5Z6N2</accession>
<comment type="function">
    <text evidence="1">Catalyzes the conversion of 4-hydroxy-tetrahydrodipicolinate (HTPA) to tetrahydrodipicolinate.</text>
</comment>
<comment type="catalytic activity">
    <reaction evidence="1">
        <text>(S)-2,3,4,5-tetrahydrodipicolinate + NAD(+) + H2O = (2S,4S)-4-hydroxy-2,3,4,5-tetrahydrodipicolinate + NADH + H(+)</text>
        <dbReference type="Rhea" id="RHEA:35323"/>
        <dbReference type="ChEBI" id="CHEBI:15377"/>
        <dbReference type="ChEBI" id="CHEBI:15378"/>
        <dbReference type="ChEBI" id="CHEBI:16845"/>
        <dbReference type="ChEBI" id="CHEBI:57540"/>
        <dbReference type="ChEBI" id="CHEBI:57945"/>
        <dbReference type="ChEBI" id="CHEBI:67139"/>
        <dbReference type="EC" id="1.17.1.8"/>
    </reaction>
</comment>
<comment type="catalytic activity">
    <reaction evidence="1">
        <text>(S)-2,3,4,5-tetrahydrodipicolinate + NADP(+) + H2O = (2S,4S)-4-hydroxy-2,3,4,5-tetrahydrodipicolinate + NADPH + H(+)</text>
        <dbReference type="Rhea" id="RHEA:35331"/>
        <dbReference type="ChEBI" id="CHEBI:15377"/>
        <dbReference type="ChEBI" id="CHEBI:15378"/>
        <dbReference type="ChEBI" id="CHEBI:16845"/>
        <dbReference type="ChEBI" id="CHEBI:57783"/>
        <dbReference type="ChEBI" id="CHEBI:58349"/>
        <dbReference type="ChEBI" id="CHEBI:67139"/>
        <dbReference type="EC" id="1.17.1.8"/>
    </reaction>
</comment>
<comment type="pathway">
    <text evidence="1">Amino-acid biosynthesis; L-lysine biosynthesis via DAP pathway; (S)-tetrahydrodipicolinate from L-aspartate: step 4/4.</text>
</comment>
<comment type="subcellular location">
    <subcellularLocation>
        <location evidence="1">Cytoplasm</location>
    </subcellularLocation>
</comment>
<comment type="similarity">
    <text evidence="1">Belongs to the DapB family.</text>
</comment>
<comment type="caution">
    <text evidence="2">Was originally thought to be a dihydrodipicolinate reductase (DHDPR), catalyzing the conversion of dihydrodipicolinate to tetrahydrodipicolinate. However, it was shown in E.coli that the substrate of the enzymatic reaction is not dihydrodipicolinate (DHDP) but in fact (2S,4S)-4-hydroxy-2,3,4,5-tetrahydrodipicolinic acid (HTPA), the product released by the DapA-catalyzed reaction.</text>
</comment>
<dbReference type="EC" id="1.17.1.8" evidence="1"/>
<dbReference type="EMBL" id="CP001173">
    <property type="protein sequence ID" value="ACI27231.1"/>
    <property type="molecule type" value="Genomic_DNA"/>
</dbReference>
<dbReference type="RefSeq" id="WP_000690522.1">
    <property type="nucleotide sequence ID" value="NC_011333.1"/>
</dbReference>
<dbReference type="SMR" id="B5Z6N2"/>
<dbReference type="KEGG" id="hpg:HPG27_468"/>
<dbReference type="HOGENOM" id="CLU_047479_2_2_7"/>
<dbReference type="UniPathway" id="UPA00034">
    <property type="reaction ID" value="UER00018"/>
</dbReference>
<dbReference type="Proteomes" id="UP000001735">
    <property type="component" value="Chromosome"/>
</dbReference>
<dbReference type="GO" id="GO:0005829">
    <property type="term" value="C:cytosol"/>
    <property type="evidence" value="ECO:0007669"/>
    <property type="project" value="TreeGrafter"/>
</dbReference>
<dbReference type="GO" id="GO:0008839">
    <property type="term" value="F:4-hydroxy-tetrahydrodipicolinate reductase"/>
    <property type="evidence" value="ECO:0007669"/>
    <property type="project" value="UniProtKB-EC"/>
</dbReference>
<dbReference type="GO" id="GO:0051287">
    <property type="term" value="F:NAD binding"/>
    <property type="evidence" value="ECO:0007669"/>
    <property type="project" value="UniProtKB-UniRule"/>
</dbReference>
<dbReference type="GO" id="GO:0050661">
    <property type="term" value="F:NADP binding"/>
    <property type="evidence" value="ECO:0007669"/>
    <property type="project" value="UniProtKB-UniRule"/>
</dbReference>
<dbReference type="GO" id="GO:0016726">
    <property type="term" value="F:oxidoreductase activity, acting on CH or CH2 groups, NAD or NADP as acceptor"/>
    <property type="evidence" value="ECO:0007669"/>
    <property type="project" value="UniProtKB-UniRule"/>
</dbReference>
<dbReference type="GO" id="GO:0019877">
    <property type="term" value="P:diaminopimelate biosynthetic process"/>
    <property type="evidence" value="ECO:0007669"/>
    <property type="project" value="UniProtKB-UniRule"/>
</dbReference>
<dbReference type="GO" id="GO:0009089">
    <property type="term" value="P:lysine biosynthetic process via diaminopimelate"/>
    <property type="evidence" value="ECO:0007669"/>
    <property type="project" value="UniProtKB-UniRule"/>
</dbReference>
<dbReference type="CDD" id="cd02274">
    <property type="entry name" value="DHDPR_N"/>
    <property type="match status" value="1"/>
</dbReference>
<dbReference type="FunFam" id="3.30.360.10:FF:000004">
    <property type="entry name" value="4-hydroxy-tetrahydrodipicolinate reductase"/>
    <property type="match status" value="1"/>
</dbReference>
<dbReference type="Gene3D" id="3.30.360.10">
    <property type="entry name" value="Dihydrodipicolinate Reductase, domain 2"/>
    <property type="match status" value="1"/>
</dbReference>
<dbReference type="Gene3D" id="3.40.50.720">
    <property type="entry name" value="NAD(P)-binding Rossmann-like Domain"/>
    <property type="match status" value="1"/>
</dbReference>
<dbReference type="HAMAP" id="MF_00102">
    <property type="entry name" value="DapB"/>
    <property type="match status" value="1"/>
</dbReference>
<dbReference type="InterPro" id="IPR022663">
    <property type="entry name" value="DapB_C"/>
</dbReference>
<dbReference type="InterPro" id="IPR000846">
    <property type="entry name" value="DapB_N"/>
</dbReference>
<dbReference type="InterPro" id="IPR022664">
    <property type="entry name" value="DapB_N_CS"/>
</dbReference>
<dbReference type="InterPro" id="IPR023940">
    <property type="entry name" value="DHDPR_bac"/>
</dbReference>
<dbReference type="InterPro" id="IPR036291">
    <property type="entry name" value="NAD(P)-bd_dom_sf"/>
</dbReference>
<dbReference type="NCBIfam" id="TIGR00036">
    <property type="entry name" value="dapB"/>
    <property type="match status" value="1"/>
</dbReference>
<dbReference type="PANTHER" id="PTHR20836:SF0">
    <property type="entry name" value="4-HYDROXY-TETRAHYDRODIPICOLINATE REDUCTASE 1, CHLOROPLASTIC-RELATED"/>
    <property type="match status" value="1"/>
</dbReference>
<dbReference type="PANTHER" id="PTHR20836">
    <property type="entry name" value="DIHYDRODIPICOLINATE REDUCTASE"/>
    <property type="match status" value="1"/>
</dbReference>
<dbReference type="Pfam" id="PF05173">
    <property type="entry name" value="DapB_C"/>
    <property type="match status" value="1"/>
</dbReference>
<dbReference type="Pfam" id="PF01113">
    <property type="entry name" value="DapB_N"/>
    <property type="match status" value="1"/>
</dbReference>
<dbReference type="PIRSF" id="PIRSF000161">
    <property type="entry name" value="DHPR"/>
    <property type="match status" value="1"/>
</dbReference>
<dbReference type="SUPFAM" id="SSF55347">
    <property type="entry name" value="Glyceraldehyde-3-phosphate dehydrogenase-like, C-terminal domain"/>
    <property type="match status" value="1"/>
</dbReference>
<dbReference type="SUPFAM" id="SSF51735">
    <property type="entry name" value="NAD(P)-binding Rossmann-fold domains"/>
    <property type="match status" value="1"/>
</dbReference>
<dbReference type="PROSITE" id="PS01298">
    <property type="entry name" value="DAPB"/>
    <property type="match status" value="1"/>
</dbReference>
<evidence type="ECO:0000255" key="1">
    <source>
        <dbReference type="HAMAP-Rule" id="MF_00102"/>
    </source>
</evidence>
<evidence type="ECO:0000305" key="2"/>
<gene>
    <name evidence="1" type="primary">dapB</name>
    <name type="ordered locus">HPG27_468</name>
</gene>
<keyword id="KW-0028">Amino-acid biosynthesis</keyword>
<keyword id="KW-0963">Cytoplasm</keyword>
<keyword id="KW-0220">Diaminopimelate biosynthesis</keyword>
<keyword id="KW-0457">Lysine biosynthesis</keyword>
<keyword id="KW-0520">NAD</keyword>
<keyword id="KW-0521">NADP</keyword>
<keyword id="KW-0560">Oxidoreductase</keyword>
<keyword id="KW-1185">Reference proteome</keyword>
<proteinExistence type="inferred from homology"/>
<feature type="chain" id="PRO_1000093975" description="4-hydroxy-tetrahydrodipicolinate reductase">
    <location>
        <begin position="1"/>
        <end position="254"/>
    </location>
</feature>
<feature type="active site" description="Proton donor/acceptor" evidence="1">
    <location>
        <position position="147"/>
    </location>
</feature>
<feature type="active site" description="Proton donor" evidence="1">
    <location>
        <position position="151"/>
    </location>
</feature>
<feature type="binding site" evidence="1">
    <location>
        <begin position="7"/>
        <end position="12"/>
    </location>
    <ligand>
        <name>NAD(+)</name>
        <dbReference type="ChEBI" id="CHEBI:57540"/>
    </ligand>
</feature>
<feature type="binding site" evidence="1">
    <location>
        <position position="35"/>
    </location>
    <ligand>
        <name>NADP(+)</name>
        <dbReference type="ChEBI" id="CHEBI:58349"/>
    </ligand>
</feature>
<feature type="binding site" evidence="1">
    <location>
        <begin position="91"/>
        <end position="93"/>
    </location>
    <ligand>
        <name>NAD(+)</name>
        <dbReference type="ChEBI" id="CHEBI:57540"/>
    </ligand>
</feature>
<feature type="binding site" evidence="1">
    <location>
        <begin position="115"/>
        <end position="118"/>
    </location>
    <ligand>
        <name>NAD(+)</name>
        <dbReference type="ChEBI" id="CHEBI:57540"/>
    </ligand>
</feature>
<feature type="binding site" evidence="1">
    <location>
        <position position="148"/>
    </location>
    <ligand>
        <name>(S)-2,3,4,5-tetrahydrodipicolinate</name>
        <dbReference type="ChEBI" id="CHEBI:16845"/>
    </ligand>
</feature>
<feature type="binding site" evidence="1">
    <location>
        <begin position="157"/>
        <end position="158"/>
    </location>
    <ligand>
        <name>(S)-2,3,4,5-tetrahydrodipicolinate</name>
        <dbReference type="ChEBI" id="CHEBI:16845"/>
    </ligand>
</feature>
<organism>
    <name type="scientific">Helicobacter pylori (strain G27)</name>
    <dbReference type="NCBI Taxonomy" id="563041"/>
    <lineage>
        <taxon>Bacteria</taxon>
        <taxon>Pseudomonadati</taxon>
        <taxon>Campylobacterota</taxon>
        <taxon>Epsilonproteobacteria</taxon>
        <taxon>Campylobacterales</taxon>
        <taxon>Helicobacteraceae</taxon>
        <taxon>Helicobacter</taxon>
    </lineage>
</organism>